<comment type="catalytic activity">
    <reaction evidence="1">
        <text>sn-glycerol 3-phosphate + an acyl-CoA = a 1-acyl-sn-glycero-3-phosphate + CoA</text>
        <dbReference type="Rhea" id="RHEA:15325"/>
        <dbReference type="ChEBI" id="CHEBI:57287"/>
        <dbReference type="ChEBI" id="CHEBI:57597"/>
        <dbReference type="ChEBI" id="CHEBI:57970"/>
        <dbReference type="ChEBI" id="CHEBI:58342"/>
        <dbReference type="EC" id="2.3.1.15"/>
    </reaction>
</comment>
<comment type="pathway">
    <text evidence="1">Phospholipid metabolism; CDP-diacylglycerol biosynthesis; CDP-diacylglycerol from sn-glycerol 3-phosphate: step 1/3.</text>
</comment>
<comment type="subcellular location">
    <subcellularLocation>
        <location evidence="1">Cell inner membrane</location>
        <topology evidence="1">Peripheral membrane protein</topology>
        <orientation evidence="1">Cytoplasmic side</orientation>
    </subcellularLocation>
</comment>
<comment type="domain">
    <text evidence="1">The HXXXXD motif is essential for acyltransferase activity and may constitute the binding site for the phosphate moiety of the glycerol-3-phosphate.</text>
</comment>
<comment type="similarity">
    <text evidence="1">Belongs to the GPAT/DAPAT family.</text>
</comment>
<proteinExistence type="inferred from homology"/>
<dbReference type="EC" id="2.3.1.15" evidence="1"/>
<dbReference type="EMBL" id="CP001113">
    <property type="protein sequence ID" value="ACF64289.1"/>
    <property type="molecule type" value="Genomic_DNA"/>
</dbReference>
<dbReference type="RefSeq" id="WP_000017360.1">
    <property type="nucleotide sequence ID" value="NZ_CCMR01000003.1"/>
</dbReference>
<dbReference type="SMR" id="B4T1T0"/>
<dbReference type="KEGG" id="see:SNSL254_A4578"/>
<dbReference type="HOGENOM" id="CLU_015407_0_0_6"/>
<dbReference type="UniPathway" id="UPA00557">
    <property type="reaction ID" value="UER00612"/>
</dbReference>
<dbReference type="Proteomes" id="UP000008824">
    <property type="component" value="Chromosome"/>
</dbReference>
<dbReference type="GO" id="GO:0005886">
    <property type="term" value="C:plasma membrane"/>
    <property type="evidence" value="ECO:0007669"/>
    <property type="project" value="UniProtKB-SubCell"/>
</dbReference>
<dbReference type="GO" id="GO:0004366">
    <property type="term" value="F:glycerol-3-phosphate O-acyltransferase activity"/>
    <property type="evidence" value="ECO:0007669"/>
    <property type="project" value="UniProtKB-UniRule"/>
</dbReference>
<dbReference type="GO" id="GO:0016024">
    <property type="term" value="P:CDP-diacylglycerol biosynthetic process"/>
    <property type="evidence" value="ECO:0007669"/>
    <property type="project" value="UniProtKB-UniRule"/>
</dbReference>
<dbReference type="GO" id="GO:0006631">
    <property type="term" value="P:fatty acid metabolic process"/>
    <property type="evidence" value="ECO:0007669"/>
    <property type="project" value="TreeGrafter"/>
</dbReference>
<dbReference type="CDD" id="cd07993">
    <property type="entry name" value="LPLAT_DHAPAT-like"/>
    <property type="match status" value="1"/>
</dbReference>
<dbReference type="HAMAP" id="MF_00393">
    <property type="entry name" value="Glyc3P_acyltrans"/>
    <property type="match status" value="1"/>
</dbReference>
<dbReference type="InterPro" id="IPR022284">
    <property type="entry name" value="GPAT/DHAPAT"/>
</dbReference>
<dbReference type="InterPro" id="IPR045520">
    <property type="entry name" value="GPAT/DHAPAT_C"/>
</dbReference>
<dbReference type="InterPro" id="IPR041728">
    <property type="entry name" value="GPAT/DHAPAT_LPLAT"/>
</dbReference>
<dbReference type="InterPro" id="IPR028354">
    <property type="entry name" value="GPAT_PlsB"/>
</dbReference>
<dbReference type="InterPro" id="IPR002123">
    <property type="entry name" value="Plipid/glycerol_acylTrfase"/>
</dbReference>
<dbReference type="NCBIfam" id="TIGR03703">
    <property type="entry name" value="plsB"/>
    <property type="match status" value="1"/>
</dbReference>
<dbReference type="NCBIfam" id="NF003441">
    <property type="entry name" value="PRK04974.1"/>
    <property type="match status" value="1"/>
</dbReference>
<dbReference type="PANTHER" id="PTHR12563:SF17">
    <property type="entry name" value="DIHYDROXYACETONE PHOSPHATE ACYLTRANSFERASE"/>
    <property type="match status" value="1"/>
</dbReference>
<dbReference type="PANTHER" id="PTHR12563">
    <property type="entry name" value="GLYCEROL-3-PHOSPHATE ACYLTRANSFERASE"/>
    <property type="match status" value="1"/>
</dbReference>
<dbReference type="Pfam" id="PF01553">
    <property type="entry name" value="Acyltransferase"/>
    <property type="match status" value="1"/>
</dbReference>
<dbReference type="Pfam" id="PF19277">
    <property type="entry name" value="GPAT_C"/>
    <property type="match status" value="1"/>
</dbReference>
<dbReference type="PIRSF" id="PIRSF500064">
    <property type="entry name" value="GPAT"/>
    <property type="match status" value="1"/>
</dbReference>
<dbReference type="PIRSF" id="PIRSF000437">
    <property type="entry name" value="GPAT_DHAPAT"/>
    <property type="match status" value="1"/>
</dbReference>
<dbReference type="SMART" id="SM00563">
    <property type="entry name" value="PlsC"/>
    <property type="match status" value="1"/>
</dbReference>
<dbReference type="SUPFAM" id="SSF69593">
    <property type="entry name" value="Glycerol-3-phosphate (1)-acyltransferase"/>
    <property type="match status" value="1"/>
</dbReference>
<protein>
    <recommendedName>
        <fullName evidence="1">Glycerol-3-phosphate acyltransferase</fullName>
        <shortName evidence="1">GPAT</shortName>
        <ecNumber evidence="1">2.3.1.15</ecNumber>
    </recommendedName>
</protein>
<accession>B4T1T0</accession>
<feature type="chain" id="PRO_1000123094" description="Glycerol-3-phosphate acyltransferase">
    <location>
        <begin position="1"/>
        <end position="806"/>
    </location>
</feature>
<feature type="short sequence motif" description="HXXXXD motif">
    <location>
        <begin position="305"/>
        <end position="310"/>
    </location>
</feature>
<keyword id="KW-0012">Acyltransferase</keyword>
<keyword id="KW-0997">Cell inner membrane</keyword>
<keyword id="KW-1003">Cell membrane</keyword>
<keyword id="KW-0444">Lipid biosynthesis</keyword>
<keyword id="KW-0443">Lipid metabolism</keyword>
<keyword id="KW-0472">Membrane</keyword>
<keyword id="KW-0594">Phospholipid biosynthesis</keyword>
<keyword id="KW-1208">Phospholipid metabolism</keyword>
<keyword id="KW-0808">Transferase</keyword>
<reference key="1">
    <citation type="journal article" date="2011" name="J. Bacteriol.">
        <title>Comparative genomics of 28 Salmonella enterica isolates: evidence for CRISPR-mediated adaptive sublineage evolution.</title>
        <authorList>
            <person name="Fricke W.F."/>
            <person name="Mammel M.K."/>
            <person name="McDermott P.F."/>
            <person name="Tartera C."/>
            <person name="White D.G."/>
            <person name="Leclerc J.E."/>
            <person name="Ravel J."/>
            <person name="Cebula T.A."/>
        </authorList>
    </citation>
    <scope>NUCLEOTIDE SEQUENCE [LARGE SCALE GENOMIC DNA]</scope>
    <source>
        <strain>SL254</strain>
    </source>
</reference>
<evidence type="ECO:0000255" key="1">
    <source>
        <dbReference type="HAMAP-Rule" id="MF_00393"/>
    </source>
</evidence>
<name>PLSB_SALNS</name>
<organism>
    <name type="scientific">Salmonella newport (strain SL254)</name>
    <dbReference type="NCBI Taxonomy" id="423368"/>
    <lineage>
        <taxon>Bacteria</taxon>
        <taxon>Pseudomonadati</taxon>
        <taxon>Pseudomonadota</taxon>
        <taxon>Gammaproteobacteria</taxon>
        <taxon>Enterobacterales</taxon>
        <taxon>Enterobacteriaceae</taxon>
        <taxon>Salmonella</taxon>
    </lineage>
</organism>
<sequence>MSGWPRIYYKLLNLPLSILVKSKSIPAEPAQELGLDTSRPIMYVLPYNSKADLLTLRAQCLAHDLPDPLEPLEIDGALLPRYVFIHGGPRVFTYYTPKEESVKLFHDYLDLHRSNPALDVQMVPVSVMFGRAPGREKGEDNPPLRMLNGVQKFFAISWLGRDSFVRFSPSVSLRRMADEHGTDKIIAQKLARVARMHFARQRLAAVGPRLPARQDLFNKLLASKAIARAVEDEARSKKISHEKAQQNAIALMEEIAANFSYEMIRLTDRILGFTWNRLYQGINVHNAERVRQLAHDGHEIVYVPCHRSHMDYLLLSYVLYHQGLVPPHIAAGINLNFWPAGPIFRRLGAFFIRRTFKGNKLYSTVFREYLGELFSRGYSVEYFVEGGRSRTGRLLDPKTGTLSMTIQAMLRGGTRPITLVPIYIGYEHVMEVGTYAKELRGATKEKESLPQMLKGLSKLRNLGQGYVNFGEPMPLMTYLNQHVPEWRESIDPIEAIRPAWLTPTVNSIAADLMVRINNAGAANAMNLCCTALLASRQRSLTREQLTEQLDCYLDLMRNVPYSTDSTVPAASAGELIAHALQMNKFEVEKDTIGDIIILPREQAVLMTYYRNNIAHMLIMPSLMAAIITQHRRISRDALQQHVEALYPMLKAELFLRWEREELASVIDALASEMQRQGLITLQDDELHINPTHSRTLQLLAAGARETLQRYAITFWLLSANPSINRSTLEKESRTVAQRLSVLHGINAPEFFDKAVFSSLVLTLRDEGYISDTGDAEPAETMKIYQMLADLITSDVRLTIESATQGE</sequence>
<gene>
    <name evidence="1" type="primary">plsB</name>
    <name type="ordered locus">SNSL254_A4578</name>
</gene>